<reference key="1">
    <citation type="journal article" date="2002" name="Nature">
        <title>The genome sequence of Schizosaccharomyces pombe.</title>
        <authorList>
            <person name="Wood V."/>
            <person name="Gwilliam R."/>
            <person name="Rajandream M.A."/>
            <person name="Lyne M.H."/>
            <person name="Lyne R."/>
            <person name="Stewart A."/>
            <person name="Sgouros J.G."/>
            <person name="Peat N."/>
            <person name="Hayles J."/>
            <person name="Baker S.G."/>
            <person name="Basham D."/>
            <person name="Bowman S."/>
            <person name="Brooks K."/>
            <person name="Brown D."/>
            <person name="Brown S."/>
            <person name="Chillingworth T."/>
            <person name="Churcher C.M."/>
            <person name="Collins M."/>
            <person name="Connor R."/>
            <person name="Cronin A."/>
            <person name="Davis P."/>
            <person name="Feltwell T."/>
            <person name="Fraser A."/>
            <person name="Gentles S."/>
            <person name="Goble A."/>
            <person name="Hamlin N."/>
            <person name="Harris D.E."/>
            <person name="Hidalgo J."/>
            <person name="Hodgson G."/>
            <person name="Holroyd S."/>
            <person name="Hornsby T."/>
            <person name="Howarth S."/>
            <person name="Huckle E.J."/>
            <person name="Hunt S."/>
            <person name="Jagels K."/>
            <person name="James K.D."/>
            <person name="Jones L."/>
            <person name="Jones M."/>
            <person name="Leather S."/>
            <person name="McDonald S."/>
            <person name="McLean J."/>
            <person name="Mooney P."/>
            <person name="Moule S."/>
            <person name="Mungall K.L."/>
            <person name="Murphy L.D."/>
            <person name="Niblett D."/>
            <person name="Odell C."/>
            <person name="Oliver K."/>
            <person name="O'Neil S."/>
            <person name="Pearson D."/>
            <person name="Quail M.A."/>
            <person name="Rabbinowitsch E."/>
            <person name="Rutherford K.M."/>
            <person name="Rutter S."/>
            <person name="Saunders D."/>
            <person name="Seeger K."/>
            <person name="Sharp S."/>
            <person name="Skelton J."/>
            <person name="Simmonds M.N."/>
            <person name="Squares R."/>
            <person name="Squares S."/>
            <person name="Stevens K."/>
            <person name="Taylor K."/>
            <person name="Taylor R.G."/>
            <person name="Tivey A."/>
            <person name="Walsh S.V."/>
            <person name="Warren T."/>
            <person name="Whitehead S."/>
            <person name="Woodward J.R."/>
            <person name="Volckaert G."/>
            <person name="Aert R."/>
            <person name="Robben J."/>
            <person name="Grymonprez B."/>
            <person name="Weltjens I."/>
            <person name="Vanstreels E."/>
            <person name="Rieger M."/>
            <person name="Schaefer M."/>
            <person name="Mueller-Auer S."/>
            <person name="Gabel C."/>
            <person name="Fuchs M."/>
            <person name="Duesterhoeft A."/>
            <person name="Fritzc C."/>
            <person name="Holzer E."/>
            <person name="Moestl D."/>
            <person name="Hilbert H."/>
            <person name="Borzym K."/>
            <person name="Langer I."/>
            <person name="Beck A."/>
            <person name="Lehrach H."/>
            <person name="Reinhardt R."/>
            <person name="Pohl T.M."/>
            <person name="Eger P."/>
            <person name="Zimmermann W."/>
            <person name="Wedler H."/>
            <person name="Wambutt R."/>
            <person name="Purnelle B."/>
            <person name="Goffeau A."/>
            <person name="Cadieu E."/>
            <person name="Dreano S."/>
            <person name="Gloux S."/>
            <person name="Lelaure V."/>
            <person name="Mottier S."/>
            <person name="Galibert F."/>
            <person name="Aves S.J."/>
            <person name="Xiang Z."/>
            <person name="Hunt C."/>
            <person name="Moore K."/>
            <person name="Hurst S.M."/>
            <person name="Lucas M."/>
            <person name="Rochet M."/>
            <person name="Gaillardin C."/>
            <person name="Tallada V.A."/>
            <person name="Garzon A."/>
            <person name="Thode G."/>
            <person name="Daga R.R."/>
            <person name="Cruzado L."/>
            <person name="Jimenez J."/>
            <person name="Sanchez M."/>
            <person name="del Rey F."/>
            <person name="Benito J."/>
            <person name="Dominguez A."/>
            <person name="Revuelta J.L."/>
            <person name="Moreno S."/>
            <person name="Armstrong J."/>
            <person name="Forsburg S.L."/>
            <person name="Cerutti L."/>
            <person name="Lowe T."/>
            <person name="McCombie W.R."/>
            <person name="Paulsen I."/>
            <person name="Potashkin J."/>
            <person name="Shpakovski G.V."/>
            <person name="Ussery D."/>
            <person name="Barrell B.G."/>
            <person name="Nurse P."/>
        </authorList>
    </citation>
    <scope>NUCLEOTIDE SEQUENCE [LARGE SCALE GENOMIC DNA]</scope>
    <source>
        <strain>972 / ATCC 24843</strain>
    </source>
</reference>
<reference key="2">
    <citation type="journal article" date="2006" name="Nat. Biotechnol.">
        <title>ORFeome cloning and global analysis of protein localization in the fission yeast Schizosaccharomyces pombe.</title>
        <authorList>
            <person name="Matsuyama A."/>
            <person name="Arai R."/>
            <person name="Yashiroda Y."/>
            <person name="Shirai A."/>
            <person name="Kamata A."/>
            <person name="Sekido S."/>
            <person name="Kobayashi Y."/>
            <person name="Hashimoto A."/>
            <person name="Hamamoto M."/>
            <person name="Hiraoka Y."/>
            <person name="Horinouchi S."/>
            <person name="Yoshida M."/>
        </authorList>
    </citation>
    <scope>SUBCELLULAR LOCATION [LARGE SCALE ANALYSIS]</scope>
</reference>
<evidence type="ECO:0000250" key="1"/>
<evidence type="ECO:0000269" key="2">
    <source>
    </source>
</evidence>
<evidence type="ECO:0000305" key="3"/>
<feature type="chain" id="PRO_0000356171" description="DNA repair/transcription protein mms19">
    <location>
        <begin position="1"/>
        <end position="1018"/>
    </location>
</feature>
<feature type="repeat" description="HEAT 1">
    <location>
        <begin position="857"/>
        <end position="895"/>
    </location>
</feature>
<feature type="repeat" description="HEAT 2">
    <location>
        <begin position="899"/>
        <end position="937"/>
    </location>
</feature>
<feature type="repeat" description="HEAT 3">
    <location>
        <begin position="940"/>
        <end position="981"/>
    </location>
</feature>
<feature type="repeat" description="HEAT 4">
    <location>
        <begin position="984"/>
        <end position="1018"/>
    </location>
</feature>
<keyword id="KW-0963">Cytoplasm</keyword>
<keyword id="KW-0227">DNA damage</keyword>
<keyword id="KW-0234">DNA repair</keyword>
<keyword id="KW-0539">Nucleus</keyword>
<keyword id="KW-1185">Reference proteome</keyword>
<keyword id="KW-0677">Repeat</keyword>
<keyword id="KW-0804">Transcription</keyword>
<name>MMS19_SCHPO</name>
<accession>Q9UTR1</accession>
<dbReference type="EMBL" id="CU329670">
    <property type="protein sequence ID" value="CAB59878.1"/>
    <property type="molecule type" value="Genomic_DNA"/>
</dbReference>
<dbReference type="PIR" id="T37484">
    <property type="entry name" value="T37484"/>
</dbReference>
<dbReference type="RefSeq" id="NP_594352.1">
    <property type="nucleotide sequence ID" value="NM_001019773.2"/>
</dbReference>
<dbReference type="SMR" id="Q9UTR1"/>
<dbReference type="BioGRID" id="278036">
    <property type="interactions" value="152"/>
</dbReference>
<dbReference type="DIP" id="DIP-59170N"/>
<dbReference type="FunCoup" id="Q9UTR1">
    <property type="interactions" value="580"/>
</dbReference>
<dbReference type="IntAct" id="Q9UTR1">
    <property type="interactions" value="2"/>
</dbReference>
<dbReference type="STRING" id="284812.Q9UTR1"/>
<dbReference type="iPTMnet" id="Q9UTR1"/>
<dbReference type="PaxDb" id="4896-SPAC1071.02.1"/>
<dbReference type="EnsemblFungi" id="SPAC1071.02.1">
    <property type="protein sequence ID" value="SPAC1071.02.1:pep"/>
    <property type="gene ID" value="SPAC1071.02"/>
</dbReference>
<dbReference type="GeneID" id="2541536"/>
<dbReference type="KEGG" id="spo:2541536"/>
<dbReference type="PomBase" id="SPAC1071.02">
    <property type="gene designation" value="mms19"/>
</dbReference>
<dbReference type="VEuPathDB" id="FungiDB:SPAC1071.02"/>
<dbReference type="eggNOG" id="KOG1967">
    <property type="taxonomic scope" value="Eukaryota"/>
</dbReference>
<dbReference type="HOGENOM" id="CLU_005943_1_0_1"/>
<dbReference type="InParanoid" id="Q9UTR1"/>
<dbReference type="OMA" id="FSFMPEF"/>
<dbReference type="PhylomeDB" id="Q9UTR1"/>
<dbReference type="PRO" id="PR:Q9UTR1"/>
<dbReference type="Proteomes" id="UP000002485">
    <property type="component" value="Chromosome I"/>
</dbReference>
<dbReference type="GO" id="GO:0005829">
    <property type="term" value="C:cytosol"/>
    <property type="evidence" value="ECO:0007005"/>
    <property type="project" value="PomBase"/>
</dbReference>
<dbReference type="GO" id="GO:0097361">
    <property type="term" value="C:cytosolic [4Fe-4S] assembly targeting complex"/>
    <property type="evidence" value="ECO:0000318"/>
    <property type="project" value="GO_Central"/>
</dbReference>
<dbReference type="GO" id="GO:0005634">
    <property type="term" value="C:nucleus"/>
    <property type="evidence" value="ECO:0000314"/>
    <property type="project" value="PomBase"/>
</dbReference>
<dbReference type="GO" id="GO:0005721">
    <property type="term" value="C:pericentric heterochromatin"/>
    <property type="evidence" value="ECO:0000269"/>
    <property type="project" value="PomBase"/>
</dbReference>
<dbReference type="GO" id="GO:0140597">
    <property type="term" value="F:protein carrier chaperone"/>
    <property type="evidence" value="ECO:0000269"/>
    <property type="project" value="PomBase"/>
</dbReference>
<dbReference type="GO" id="GO:0006281">
    <property type="term" value="P:DNA repair"/>
    <property type="evidence" value="ECO:0007669"/>
    <property type="project" value="UniProtKB-KW"/>
</dbReference>
<dbReference type="GO" id="GO:0051604">
    <property type="term" value="P:protein maturation"/>
    <property type="evidence" value="ECO:0007669"/>
    <property type="project" value="InterPro"/>
</dbReference>
<dbReference type="Gene3D" id="1.25.10.10">
    <property type="entry name" value="Leucine-rich Repeat Variant"/>
    <property type="match status" value="2"/>
</dbReference>
<dbReference type="InterPro" id="IPR011989">
    <property type="entry name" value="ARM-like"/>
</dbReference>
<dbReference type="InterPro" id="IPR016024">
    <property type="entry name" value="ARM-type_fold"/>
</dbReference>
<dbReference type="InterPro" id="IPR039920">
    <property type="entry name" value="MMS19"/>
</dbReference>
<dbReference type="InterPro" id="IPR024687">
    <property type="entry name" value="MMS19_C"/>
</dbReference>
<dbReference type="InterPro" id="IPR029240">
    <property type="entry name" value="MMS19_N"/>
</dbReference>
<dbReference type="PANTHER" id="PTHR12891">
    <property type="entry name" value="DNA REPAIR/TRANSCRIPTION PROTEIN MET18/MMS19"/>
    <property type="match status" value="1"/>
</dbReference>
<dbReference type="PANTHER" id="PTHR12891:SF0">
    <property type="entry name" value="MMS19 NUCLEOTIDE EXCISION REPAIR PROTEIN HOMOLOG"/>
    <property type="match status" value="1"/>
</dbReference>
<dbReference type="Pfam" id="PF12460">
    <property type="entry name" value="MMS19_C"/>
    <property type="match status" value="1"/>
</dbReference>
<dbReference type="Pfam" id="PF14500">
    <property type="entry name" value="MMS19_N"/>
    <property type="match status" value="1"/>
</dbReference>
<dbReference type="SUPFAM" id="SSF48371">
    <property type="entry name" value="ARM repeat"/>
    <property type="match status" value="2"/>
</dbReference>
<proteinExistence type="evidence at protein level"/>
<comment type="function">
    <text evidence="1">Key component of the cytosolic iron-sulfur protein assembly (CIA) machinery that mediates the incorporation of iron-sulfur cluster into apoproteins specifically involved in DNA metabolism and genomic integrity. Acts as an adapter between early-acting CIA components and a subset of cellular target iron-sulfur proteins such as rad3/xpd and dna2, thereby playing a key role in nucleotide excision repair (NER) and RNA polymerase II (POL II) transcription (By similarity).</text>
</comment>
<comment type="interaction">
    <interactant intactId="EBI-15934093">
        <id>Q9UTR1</id>
    </interactant>
    <interactant intactId="EBI-904886">
        <id>O74560</id>
        <label>raf2</label>
    </interactant>
    <organismsDiffer>false</organismsDiffer>
    <experiments>2</experiments>
</comment>
<comment type="subcellular location">
    <subcellularLocation>
        <location evidence="2">Cytoplasm</location>
    </subcellularLocation>
    <subcellularLocation>
        <location evidence="2">Nucleus</location>
    </subcellularLocation>
</comment>
<comment type="similarity">
    <text evidence="3">Belongs to the MET18/MMS19 family.</text>
</comment>
<gene>
    <name type="primary">mms19</name>
    <name type="ORF">SPAC1071.02</name>
</gene>
<sequence>MSSNLVALYLFSIDRSQDEANDVVDRIVEEIVTDRMGIVDLVTSIGEYLTDNNISVRAKAVLLLSQTLGELPKDRLPAKHVSVLLQFYLSRLDDEVTMKENALGIGALLNMQNFPAQKIVDVCKALFSSTDMPKYAQATRLNILKVFETIIDNYLFFISSQTRDAFFSGICSTFAGEKDPRNLMLVFSMLKKILSTFPIDGFEQQFFDITYCYFPITFRAPPDATNLAITSDDLKIALRETLVANDAFSKLLLPALFERLKASTVRIKIDALNIYIEACKTWRVGAYLWSAKDFWESIKQEILNSTDAELQNLALGALNTLASKFYKEEGFSSSFTEFVDMILIQLSQRLLEDVNVKSCGSCAAVFASLASISVETFNYCSCNFLPSVLDLPMVNEPLEKQKGMLVFLEYVYKCLVLLYGKWRSKNQADIDNPLLVYKDKQLSFVSGSLMGTAKDETEIRMLALKVIFLMASIKNFLTESELTMVLQFLDDIAFDFSDPIKKKATECLKDLGLLKPDFLLLTSFPFAFSKLTDDVTAKSSSEETFKQYLSVLVSISEERSLFKALVIRLVEMLKDQFKSKEMSVDLVESIVQSLSVAFKERNDRNEQEIPFFFEELLKQLFTLCFANCESMNVRCLIYVSQTINEIVRVNHFEFQEKFVGQLWKLYMENSNSDLIETEGCEKAAERFTLAASLSDQKFLNLVVLLQGGLNGLSKKLHFIEKLNIELLNLLINVVFVTESPGVKISALRLISSLINKCEKDEDISSFISSKGVTSLWDKVYTGTPKESEAALDVLAWVDKALVSRKHSEGIPLAFKLLDTLNLQNVGDSSVKALSIIIKDDPALSKENSYVEKLLYKQRFYASVSPKILEHISTATGGEKSLYLMLLSNVIGNVPKEIVIPDMPSILPLLLQCLSLSDISVKLSTLNVIHTSVKELTSLLTEYLDTLIPSLLAIPKDMNNPTVVRLLALKCLGSLPEFTPTTNLQLFRDKVIRGLIPCLDDPKRVVRTEASRTRHKWYI</sequence>
<protein>
    <recommendedName>
        <fullName>DNA repair/transcription protein mms19</fullName>
    </recommendedName>
</protein>
<organism>
    <name type="scientific">Schizosaccharomyces pombe (strain 972 / ATCC 24843)</name>
    <name type="common">Fission yeast</name>
    <dbReference type="NCBI Taxonomy" id="284812"/>
    <lineage>
        <taxon>Eukaryota</taxon>
        <taxon>Fungi</taxon>
        <taxon>Dikarya</taxon>
        <taxon>Ascomycota</taxon>
        <taxon>Taphrinomycotina</taxon>
        <taxon>Schizosaccharomycetes</taxon>
        <taxon>Schizosaccharomycetales</taxon>
        <taxon>Schizosaccharomycetaceae</taxon>
        <taxon>Schizosaccharomyces</taxon>
    </lineage>
</organism>